<proteinExistence type="inferred from homology"/>
<sequence>MAVPKRKTSPSRRGMRRSHDALSAEAFHECSNCGELKRPHMLCNACGHYNGREVIAVGL</sequence>
<accession>Q2G5R9</accession>
<reference key="1">
    <citation type="submission" date="2006-01" db="EMBL/GenBank/DDBJ databases">
        <title>Complete sequence of Novosphingobium aromaticivorans DSM 12444.</title>
        <authorList>
            <consortium name="US DOE Joint Genome Institute"/>
            <person name="Copeland A."/>
            <person name="Lucas S."/>
            <person name="Lapidus A."/>
            <person name="Barry K."/>
            <person name="Detter J.C."/>
            <person name="Glavina T."/>
            <person name="Hammon N."/>
            <person name="Israni S."/>
            <person name="Pitluck S."/>
            <person name="Chain P."/>
            <person name="Malfatti S."/>
            <person name="Shin M."/>
            <person name="Vergez L."/>
            <person name="Schmutz J."/>
            <person name="Larimer F."/>
            <person name="Land M."/>
            <person name="Kyrpides N."/>
            <person name="Ivanova N."/>
            <person name="Fredrickson J."/>
            <person name="Balkwill D."/>
            <person name="Romine M.F."/>
            <person name="Richardson P."/>
        </authorList>
    </citation>
    <scope>NUCLEOTIDE SEQUENCE [LARGE SCALE GENOMIC DNA]</scope>
    <source>
        <strain>ATCC 700278 / DSM 12444 / CCUG 56034 / CIP 105152 / NBRC 16084 / F199</strain>
    </source>
</reference>
<feature type="chain" id="PRO_0000296518" description="Large ribosomal subunit protein bL32">
    <location>
        <begin position="1"/>
        <end position="59"/>
    </location>
</feature>
<feature type="region of interest" description="Disordered" evidence="2">
    <location>
        <begin position="1"/>
        <end position="20"/>
    </location>
</feature>
<feature type="compositionally biased region" description="Basic residues" evidence="2">
    <location>
        <begin position="1"/>
        <end position="16"/>
    </location>
</feature>
<comment type="similarity">
    <text evidence="1">Belongs to the bacterial ribosomal protein bL32 family.</text>
</comment>
<gene>
    <name evidence="1" type="primary">rpmF</name>
    <name type="ordered locus">Saro_2368</name>
</gene>
<organism>
    <name type="scientific">Novosphingobium aromaticivorans (strain ATCC 700278 / DSM 12444 / CCUG 56034 / CIP 105152 / NBRC 16084 / F199)</name>
    <dbReference type="NCBI Taxonomy" id="279238"/>
    <lineage>
        <taxon>Bacteria</taxon>
        <taxon>Pseudomonadati</taxon>
        <taxon>Pseudomonadota</taxon>
        <taxon>Alphaproteobacteria</taxon>
        <taxon>Sphingomonadales</taxon>
        <taxon>Sphingomonadaceae</taxon>
        <taxon>Novosphingobium</taxon>
    </lineage>
</organism>
<keyword id="KW-1185">Reference proteome</keyword>
<keyword id="KW-0687">Ribonucleoprotein</keyword>
<keyword id="KW-0689">Ribosomal protein</keyword>
<protein>
    <recommendedName>
        <fullName evidence="1">Large ribosomal subunit protein bL32</fullName>
    </recommendedName>
    <alternativeName>
        <fullName evidence="3">50S ribosomal protein L32</fullName>
    </alternativeName>
</protein>
<dbReference type="EMBL" id="CP000248">
    <property type="protein sequence ID" value="ABD26804.1"/>
    <property type="molecule type" value="Genomic_DNA"/>
</dbReference>
<dbReference type="RefSeq" id="WP_011446010.1">
    <property type="nucleotide sequence ID" value="NC_007794.1"/>
</dbReference>
<dbReference type="SMR" id="Q2G5R9"/>
<dbReference type="STRING" id="279238.Saro_2368"/>
<dbReference type="KEGG" id="nar:Saro_2368"/>
<dbReference type="eggNOG" id="COG0333">
    <property type="taxonomic scope" value="Bacteria"/>
</dbReference>
<dbReference type="HOGENOM" id="CLU_129084_1_3_5"/>
<dbReference type="Proteomes" id="UP000009134">
    <property type="component" value="Chromosome"/>
</dbReference>
<dbReference type="GO" id="GO:0015934">
    <property type="term" value="C:large ribosomal subunit"/>
    <property type="evidence" value="ECO:0007669"/>
    <property type="project" value="InterPro"/>
</dbReference>
<dbReference type="GO" id="GO:0003735">
    <property type="term" value="F:structural constituent of ribosome"/>
    <property type="evidence" value="ECO:0007669"/>
    <property type="project" value="InterPro"/>
</dbReference>
<dbReference type="GO" id="GO:0006412">
    <property type="term" value="P:translation"/>
    <property type="evidence" value="ECO:0007669"/>
    <property type="project" value="UniProtKB-UniRule"/>
</dbReference>
<dbReference type="Gene3D" id="1.20.5.640">
    <property type="entry name" value="Single helix bin"/>
    <property type="match status" value="1"/>
</dbReference>
<dbReference type="HAMAP" id="MF_00340">
    <property type="entry name" value="Ribosomal_bL32"/>
    <property type="match status" value="1"/>
</dbReference>
<dbReference type="InterPro" id="IPR002677">
    <property type="entry name" value="Ribosomal_bL32"/>
</dbReference>
<dbReference type="InterPro" id="IPR044957">
    <property type="entry name" value="Ribosomal_bL32_bact"/>
</dbReference>
<dbReference type="InterPro" id="IPR011332">
    <property type="entry name" value="Ribosomal_zn-bd"/>
</dbReference>
<dbReference type="NCBIfam" id="TIGR01031">
    <property type="entry name" value="rpmF_bact"/>
    <property type="match status" value="1"/>
</dbReference>
<dbReference type="PANTHER" id="PTHR35534">
    <property type="entry name" value="50S RIBOSOMAL PROTEIN L32"/>
    <property type="match status" value="1"/>
</dbReference>
<dbReference type="PANTHER" id="PTHR35534:SF1">
    <property type="entry name" value="LARGE RIBOSOMAL SUBUNIT PROTEIN BL32"/>
    <property type="match status" value="1"/>
</dbReference>
<dbReference type="Pfam" id="PF01783">
    <property type="entry name" value="Ribosomal_L32p"/>
    <property type="match status" value="1"/>
</dbReference>
<dbReference type="SUPFAM" id="SSF57829">
    <property type="entry name" value="Zn-binding ribosomal proteins"/>
    <property type="match status" value="1"/>
</dbReference>
<evidence type="ECO:0000255" key="1">
    <source>
        <dbReference type="HAMAP-Rule" id="MF_00340"/>
    </source>
</evidence>
<evidence type="ECO:0000256" key="2">
    <source>
        <dbReference type="SAM" id="MobiDB-lite"/>
    </source>
</evidence>
<evidence type="ECO:0000305" key="3"/>
<name>RL32_NOVAD</name>